<proteinExistence type="evidence at protein level"/>
<name>SL9A_BOTJA</name>
<organism>
    <name type="scientific">Bothrops jararaca</name>
    <name type="common">Jararaca</name>
    <name type="synonym">Bothrops jajaraca</name>
    <dbReference type="NCBI Taxonomy" id="8724"/>
    <lineage>
        <taxon>Eukaryota</taxon>
        <taxon>Metazoa</taxon>
        <taxon>Chordata</taxon>
        <taxon>Craniata</taxon>
        <taxon>Vertebrata</taxon>
        <taxon>Euteleostomi</taxon>
        <taxon>Lepidosauria</taxon>
        <taxon>Squamata</taxon>
        <taxon>Bifurcata</taxon>
        <taxon>Unidentata</taxon>
        <taxon>Episquamata</taxon>
        <taxon>Toxicofera</taxon>
        <taxon>Serpentes</taxon>
        <taxon>Colubroidea</taxon>
        <taxon>Viperidae</taxon>
        <taxon>Crotalinae</taxon>
        <taxon>Bothrops</taxon>
    </lineage>
</organism>
<feature type="chain" id="PRO_0000355256" description="Snaclec coagulation factor IX/factor X-binding protein subunit A">
    <location>
        <begin position="1"/>
        <end position="30" status="greater than"/>
    </location>
</feature>
<feature type="domain" description="C-type lectin" evidence="2">
    <location>
        <begin position="1"/>
        <end position="30" status="greater than"/>
    </location>
</feature>
<feature type="disulfide bond" evidence="2">
    <location>
        <begin position="2"/>
        <end position="13"/>
    </location>
</feature>
<feature type="non-terminal residue">
    <location>
        <position position="30"/>
    </location>
</feature>
<protein>
    <recommendedName>
        <fullName>Snaclec coagulation factor IX/factor X-binding protein subunit A</fullName>
        <shortName>IX/X-bp subunit A</shortName>
    </recommendedName>
</protein>
<evidence type="ECO:0000250" key="1"/>
<evidence type="ECO:0000255" key="2">
    <source>
        <dbReference type="PROSITE-ProRule" id="PRU00040"/>
    </source>
</evidence>
<evidence type="ECO:0000305" key="3"/>
<keyword id="KW-1203">Blood coagulation cascade inhibiting toxin</keyword>
<keyword id="KW-0106">Calcium</keyword>
<keyword id="KW-0903">Direct protein sequencing</keyword>
<keyword id="KW-1015">Disulfide bond</keyword>
<keyword id="KW-1199">Hemostasis impairing toxin</keyword>
<keyword id="KW-0479">Metal-binding</keyword>
<keyword id="KW-0964">Secreted</keyword>
<keyword id="KW-0800">Toxin</keyword>
<dbReference type="PIR" id="B53088">
    <property type="entry name" value="B53088"/>
</dbReference>
<dbReference type="SMR" id="Q9PS05"/>
<dbReference type="GO" id="GO:0005576">
    <property type="term" value="C:extracellular region"/>
    <property type="evidence" value="ECO:0007669"/>
    <property type="project" value="UniProtKB-SubCell"/>
</dbReference>
<dbReference type="GO" id="GO:0046872">
    <property type="term" value="F:metal ion binding"/>
    <property type="evidence" value="ECO:0007669"/>
    <property type="project" value="UniProtKB-KW"/>
</dbReference>
<dbReference type="GO" id="GO:0090729">
    <property type="term" value="F:toxin activity"/>
    <property type="evidence" value="ECO:0007669"/>
    <property type="project" value="UniProtKB-KW"/>
</dbReference>
<dbReference type="Gene3D" id="3.10.100.10">
    <property type="entry name" value="Mannose-Binding Protein A, subunit A"/>
    <property type="match status" value="1"/>
</dbReference>
<dbReference type="InterPro" id="IPR016186">
    <property type="entry name" value="C-type_lectin-like/link_sf"/>
</dbReference>
<dbReference type="InterPro" id="IPR016187">
    <property type="entry name" value="CTDL_fold"/>
</dbReference>
<dbReference type="SUPFAM" id="SSF56436">
    <property type="entry name" value="C-type lectin-like"/>
    <property type="match status" value="1"/>
</dbReference>
<sequence length="30" mass="3709">DCPSDWSPYEGHCYKHFIKWMNNEDAERFC</sequence>
<comment type="function">
    <text evidence="1">Anticoagulant protein which binds to the gamma-carboxyglutamic acid-domain regions of factors IX (F9) and factor X (F10) in the presence of calcium with a 1 to 1 stoichiometry.</text>
</comment>
<comment type="subunit">
    <text evidence="1">Heterodimer of subunits A and B; disulfide-linked.</text>
</comment>
<comment type="subcellular location">
    <subcellularLocation>
        <location evidence="1">Secreted</location>
    </subcellularLocation>
</comment>
<comment type="tissue specificity">
    <text>Expressed by the venom gland.</text>
</comment>
<comment type="miscellaneous">
    <text evidence="1">Calcium is required for ligand binding.</text>
</comment>
<comment type="similarity">
    <text evidence="3">Belongs to the snaclec family.</text>
</comment>
<accession>Q9PS05</accession>
<reference key="1">
    <citation type="journal article" date="1993" name="Biochemistry">
        <title>Isolation and characterization of an anticoagulant protein homologous to botrocetin from the venom of Bothrops jararaca.</title>
        <authorList>
            <person name="Sekiya F."/>
            <person name="Atoda H."/>
            <person name="Morita T."/>
        </authorList>
    </citation>
    <scope>PROTEIN SEQUENCE</scope>
    <source>
        <tissue>Venom</tissue>
    </source>
</reference>